<proteinExistence type="inferred from homology"/>
<protein>
    <recommendedName>
        <fullName>Homeobox protein Hox-A5a</fullName>
    </recommendedName>
</protein>
<feature type="chain" id="PRO_0000265967" description="Homeobox protein Hox-A5a">
    <location>
        <begin position="1"/>
        <end position="274"/>
    </location>
</feature>
<feature type="DNA-binding region" description="Homeobox" evidence="2">
    <location>
        <begin position="198"/>
        <end position="257"/>
    </location>
</feature>
<feature type="region of interest" description="Disordered" evidence="3">
    <location>
        <begin position="68"/>
        <end position="177"/>
    </location>
</feature>
<feature type="short sequence motif" description="Antp-type hexapeptide">
    <location>
        <begin position="180"/>
        <end position="185"/>
    </location>
</feature>
<feature type="compositionally biased region" description="Polar residues" evidence="3">
    <location>
        <begin position="75"/>
        <end position="91"/>
    </location>
</feature>
<feature type="compositionally biased region" description="Low complexity" evidence="3">
    <location>
        <begin position="92"/>
        <end position="101"/>
    </location>
</feature>
<feature type="compositionally biased region" description="Polar residues" evidence="3">
    <location>
        <begin position="116"/>
        <end position="143"/>
    </location>
</feature>
<feature type="compositionally biased region" description="Polar residues" evidence="3">
    <location>
        <begin position="168"/>
        <end position="177"/>
    </location>
</feature>
<gene>
    <name type="primary">hoxa5a</name>
</gene>
<organism>
    <name type="scientific">Takifugu rubripes</name>
    <name type="common">Japanese pufferfish</name>
    <name type="synonym">Fugu rubripes</name>
    <dbReference type="NCBI Taxonomy" id="31033"/>
    <lineage>
        <taxon>Eukaryota</taxon>
        <taxon>Metazoa</taxon>
        <taxon>Chordata</taxon>
        <taxon>Craniata</taxon>
        <taxon>Vertebrata</taxon>
        <taxon>Euteleostomi</taxon>
        <taxon>Actinopterygii</taxon>
        <taxon>Neopterygii</taxon>
        <taxon>Teleostei</taxon>
        <taxon>Neoteleostei</taxon>
        <taxon>Acanthomorphata</taxon>
        <taxon>Eupercaria</taxon>
        <taxon>Tetraodontiformes</taxon>
        <taxon>Tetradontoidea</taxon>
        <taxon>Tetraodontidae</taxon>
        <taxon>Takifugu</taxon>
    </lineage>
</organism>
<evidence type="ECO:0000250" key="1"/>
<evidence type="ECO:0000255" key="2">
    <source>
        <dbReference type="PROSITE-ProRule" id="PRU00108"/>
    </source>
</evidence>
<evidence type="ECO:0000256" key="3">
    <source>
        <dbReference type="SAM" id="MobiDB-lite"/>
    </source>
</evidence>
<evidence type="ECO:0000305" key="4"/>
<keyword id="KW-0217">Developmental protein</keyword>
<keyword id="KW-0238">DNA-binding</keyword>
<keyword id="KW-0371">Homeobox</keyword>
<keyword id="KW-0539">Nucleus</keyword>
<keyword id="KW-1185">Reference proteome</keyword>
<keyword id="KW-0804">Transcription</keyword>
<keyword id="KW-0805">Transcription regulation</keyword>
<comment type="function">
    <text evidence="1">Sequence-specific transcription factor which is part of a developmental regulatory system that provides cells with specific positional identities on the anterior-posterior axis.</text>
</comment>
<comment type="subcellular location">
    <subcellularLocation>
        <location evidence="2">Nucleus</location>
    </subcellularLocation>
</comment>
<comment type="similarity">
    <text evidence="4">Belongs to the Antp homeobox family.</text>
</comment>
<accession>Q1KL14</accession>
<name>HXA5A_TAKRU</name>
<dbReference type="EMBL" id="DQ481663">
    <property type="protein sequence ID" value="ABF22380.1"/>
    <property type="molecule type" value="Genomic_DNA"/>
</dbReference>
<dbReference type="SMR" id="Q1KL14"/>
<dbReference type="FunCoup" id="Q1KL14">
    <property type="interactions" value="157"/>
</dbReference>
<dbReference type="STRING" id="31033.ENSTRUP00000046718"/>
<dbReference type="Ensembl" id="ENSTRUT00000046876.3">
    <property type="protein sequence ID" value="ENSTRUP00000046718.3"/>
    <property type="gene ID" value="ENSTRUG00000018252.3"/>
</dbReference>
<dbReference type="eggNOG" id="KOG0489">
    <property type="taxonomic scope" value="Eukaryota"/>
</dbReference>
<dbReference type="GeneTree" id="ENSGT00940000159894"/>
<dbReference type="HOGENOM" id="CLU_061398_2_1_1"/>
<dbReference type="InParanoid" id="Q1KL14"/>
<dbReference type="OMA" id="HNYGEHN"/>
<dbReference type="TreeFam" id="TF316310"/>
<dbReference type="Proteomes" id="UP000005226">
    <property type="component" value="Chromosome 12"/>
</dbReference>
<dbReference type="GO" id="GO:0005634">
    <property type="term" value="C:nucleus"/>
    <property type="evidence" value="ECO:0007669"/>
    <property type="project" value="UniProtKB-SubCell"/>
</dbReference>
<dbReference type="GO" id="GO:0000981">
    <property type="term" value="F:DNA-binding transcription factor activity, RNA polymerase II-specific"/>
    <property type="evidence" value="ECO:0007669"/>
    <property type="project" value="InterPro"/>
</dbReference>
<dbReference type="GO" id="GO:0000978">
    <property type="term" value="F:RNA polymerase II cis-regulatory region sequence-specific DNA binding"/>
    <property type="evidence" value="ECO:0007669"/>
    <property type="project" value="TreeGrafter"/>
</dbReference>
<dbReference type="GO" id="GO:0009952">
    <property type="term" value="P:anterior/posterior pattern specification"/>
    <property type="evidence" value="ECO:0007669"/>
    <property type="project" value="TreeGrafter"/>
</dbReference>
<dbReference type="CDD" id="cd00086">
    <property type="entry name" value="homeodomain"/>
    <property type="match status" value="1"/>
</dbReference>
<dbReference type="FunFam" id="1.10.10.60:FF:000055">
    <property type="entry name" value="Homeobox protein Hox-A5"/>
    <property type="match status" value="1"/>
</dbReference>
<dbReference type="Gene3D" id="1.10.10.60">
    <property type="entry name" value="Homeodomain-like"/>
    <property type="match status" value="1"/>
</dbReference>
<dbReference type="InterPro" id="IPR050296">
    <property type="entry name" value="Antp_homeobox"/>
</dbReference>
<dbReference type="InterPro" id="IPR001356">
    <property type="entry name" value="HD"/>
</dbReference>
<dbReference type="InterPro" id="IPR020479">
    <property type="entry name" value="HD_metazoa"/>
</dbReference>
<dbReference type="InterPro" id="IPR017995">
    <property type="entry name" value="Homeobox_antennapedia"/>
</dbReference>
<dbReference type="InterPro" id="IPR001827">
    <property type="entry name" value="Homeobox_Antennapedia_CS"/>
</dbReference>
<dbReference type="InterPro" id="IPR017970">
    <property type="entry name" value="Homeobox_CS"/>
</dbReference>
<dbReference type="InterPro" id="IPR009057">
    <property type="entry name" value="Homeodomain-like_sf"/>
</dbReference>
<dbReference type="PANTHER" id="PTHR45659">
    <property type="entry name" value="HOMEOBOX PROTEIN HOX"/>
    <property type="match status" value="1"/>
</dbReference>
<dbReference type="PANTHER" id="PTHR45659:SF10">
    <property type="entry name" value="HOMEOBOX PROTEIN HOX-A5"/>
    <property type="match status" value="1"/>
</dbReference>
<dbReference type="Pfam" id="PF00046">
    <property type="entry name" value="Homeodomain"/>
    <property type="match status" value="1"/>
</dbReference>
<dbReference type="PRINTS" id="PR00025">
    <property type="entry name" value="ANTENNAPEDIA"/>
</dbReference>
<dbReference type="PRINTS" id="PR00024">
    <property type="entry name" value="HOMEOBOX"/>
</dbReference>
<dbReference type="SMART" id="SM00389">
    <property type="entry name" value="HOX"/>
    <property type="match status" value="1"/>
</dbReference>
<dbReference type="SUPFAM" id="SSF46689">
    <property type="entry name" value="Homeodomain-like"/>
    <property type="match status" value="1"/>
</dbReference>
<dbReference type="PROSITE" id="PS00032">
    <property type="entry name" value="ANTENNAPEDIA"/>
    <property type="match status" value="1"/>
</dbReference>
<dbReference type="PROSITE" id="PS00027">
    <property type="entry name" value="HOMEOBOX_1"/>
    <property type="match status" value="1"/>
</dbReference>
<dbReference type="PROSITE" id="PS50071">
    <property type="entry name" value="HOMEOBOX_2"/>
    <property type="match status" value="1"/>
</dbReference>
<reference key="1">
    <citation type="journal article" date="2006" name="Proc. Natl. Acad. Sci. U.S.A.">
        <title>Highly conserved syntenic blocks at the vertebrate Hox loci and conserved regulatory elements within and outside Hox gene clusters.</title>
        <authorList>
            <person name="Lee A.P."/>
            <person name="Koh E.G.L."/>
            <person name="Tay A."/>
            <person name="Brenner S."/>
            <person name="Venkatesh B."/>
        </authorList>
    </citation>
    <scope>NUCLEOTIDE SEQUENCE [GENOMIC DNA]</scope>
</reference>
<sequence length="274" mass="30717">MSSYFVNSFCGRYPNGADFQLHNYGDHDTADEQYRNSTTMHSTRYGYGYNGMDLTVGRDGTGHFVGNERTRGYSENHSATAASVESVRYNQTTNTTGTSSLSPPPDPLPCSSVSSASPVTETQPQHRVVKNSVTTPCSSSSGGTLLVNRDCASKSSPLEEEKPAGGATPQNVNDSTQPQIYPWMRKIHISHELSGPEGKRARTAYTRYQTLELEKEFHFNRYLTRRRRIEIAHALCLSERQIKIWFQNRRMKWKKDNKLKSMNMASAGGGVYRP</sequence>